<accession>P31665</accession>
<accession>P75660</accession>
<accession>Q8KJQ2</accession>
<dbReference type="EC" id="3.1.21.-"/>
<dbReference type="EMBL" id="L17086">
    <property type="protein sequence ID" value="AAA24273.1"/>
    <property type="status" value="ALT_FRAME"/>
    <property type="molecule type" value="Genomic_DNA"/>
</dbReference>
<dbReference type="EMBL" id="U00096">
    <property type="protein sequence ID" value="AAC73243.1"/>
    <property type="molecule type" value="Genomic_DNA"/>
</dbReference>
<dbReference type="EMBL" id="AP009048">
    <property type="protein sequence ID" value="BAB96710.2"/>
    <property type="molecule type" value="Genomic_DNA"/>
</dbReference>
<dbReference type="PIR" id="D64736">
    <property type="entry name" value="D64736"/>
</dbReference>
<dbReference type="RefSeq" id="NP_414674.1">
    <property type="nucleotide sequence ID" value="NC_000913.3"/>
</dbReference>
<dbReference type="RefSeq" id="WP_000339954.1">
    <property type="nucleotide sequence ID" value="NZ_STEB01000010.1"/>
</dbReference>
<dbReference type="SMR" id="P31665"/>
<dbReference type="BioGRID" id="4260707">
    <property type="interactions" value="249"/>
</dbReference>
<dbReference type="FunCoup" id="P31665">
    <property type="interactions" value="4"/>
</dbReference>
<dbReference type="STRING" id="511145.b0132"/>
<dbReference type="PaxDb" id="511145-b0132"/>
<dbReference type="EnsemblBacteria" id="AAC73243">
    <property type="protein sequence ID" value="AAC73243"/>
    <property type="gene ID" value="b0132"/>
</dbReference>
<dbReference type="GeneID" id="944781"/>
<dbReference type="KEGG" id="ecj:JW5010"/>
<dbReference type="KEGG" id="eco:b0132"/>
<dbReference type="KEGG" id="ecoc:C3026_00565"/>
<dbReference type="PATRIC" id="fig|1411691.4.peg.2149"/>
<dbReference type="EchoBASE" id="EB1698"/>
<dbReference type="eggNOG" id="COG5464">
    <property type="taxonomic scope" value="Bacteria"/>
</dbReference>
<dbReference type="HOGENOM" id="CLU_059548_1_0_6"/>
<dbReference type="InParanoid" id="P31665"/>
<dbReference type="OMA" id="RVYNNPF"/>
<dbReference type="OrthoDB" id="5562276at2"/>
<dbReference type="PhylomeDB" id="P31665"/>
<dbReference type="BioCyc" id="EcoCyc:EG11748-MONOMER"/>
<dbReference type="PRO" id="PR:P31665"/>
<dbReference type="Proteomes" id="UP000000625">
    <property type="component" value="Chromosome"/>
</dbReference>
<dbReference type="GO" id="GO:1990238">
    <property type="term" value="F:double-stranded DNA endonuclease activity"/>
    <property type="evidence" value="ECO:0000318"/>
    <property type="project" value="GO_Central"/>
</dbReference>
<dbReference type="GO" id="GO:0006310">
    <property type="term" value="P:DNA recombination"/>
    <property type="evidence" value="ECO:0000314"/>
    <property type="project" value="UniProtKB"/>
</dbReference>
<dbReference type="InterPro" id="IPR051699">
    <property type="entry name" value="Rpn/YhgA-like_nuclease"/>
</dbReference>
<dbReference type="InterPro" id="IPR010106">
    <property type="entry name" value="RpnA"/>
</dbReference>
<dbReference type="InterPro" id="IPR006842">
    <property type="entry name" value="Transposase_31"/>
</dbReference>
<dbReference type="NCBIfam" id="TIGR01784">
    <property type="entry name" value="T_den_put_tspse"/>
    <property type="match status" value="1"/>
</dbReference>
<dbReference type="PANTHER" id="PTHR34611">
    <property type="match status" value="1"/>
</dbReference>
<dbReference type="PANTHER" id="PTHR34611:SF2">
    <property type="entry name" value="INACTIVE RECOMBINATION-PROMOTING NUCLEASE-LIKE PROTEIN RPNE-RELATED"/>
    <property type="match status" value="1"/>
</dbReference>
<dbReference type="Pfam" id="PF04754">
    <property type="entry name" value="Transposase_31"/>
    <property type="match status" value="1"/>
</dbReference>
<protein>
    <recommendedName>
        <fullName evidence="2">Recombination-promoting nuclease RpnC</fullName>
        <ecNumber>3.1.21.-</ecNumber>
    </recommendedName>
</protein>
<gene>
    <name evidence="2" type="primary">rpnC</name>
    <name type="synonym">yadD</name>
    <name type="ordered locus">b0132</name>
    <name type="ordered locus">JW5010</name>
</gene>
<reference key="1">
    <citation type="submission" date="1993-06" db="EMBL/GenBank/DDBJ databases">
        <title>Nucleotide sequence of the Escherichia coli panBCD gene cluster.</title>
        <authorList>
            <person name="Merkel W.K."/>
            <person name="Nichols B.P."/>
        </authorList>
    </citation>
    <scope>NUCLEOTIDE SEQUENCE [GENOMIC DNA]</scope>
    <source>
        <strain>K12 / W3110 / ATCC 27325 / DSM 5911</strain>
    </source>
</reference>
<reference key="2">
    <citation type="journal article" date="1994" name="Nucleic Acids Res.">
        <title>Systematic sequencing of the Escherichia coli genome: analysis of the 2.4-4.1 min (110,917-193,643 bp) region.</title>
        <authorList>
            <person name="Fujita N."/>
            <person name="Mori H."/>
            <person name="Yura T."/>
            <person name="Ishihama A."/>
        </authorList>
    </citation>
    <scope>NUCLEOTIDE SEQUENCE [LARGE SCALE GENOMIC DNA]</scope>
    <source>
        <strain>K12 / W3110 / ATCC 27325 / DSM 5911</strain>
    </source>
</reference>
<reference key="3">
    <citation type="journal article" date="1997" name="Science">
        <title>The complete genome sequence of Escherichia coli K-12.</title>
        <authorList>
            <person name="Blattner F.R."/>
            <person name="Plunkett G. III"/>
            <person name="Bloch C.A."/>
            <person name="Perna N.T."/>
            <person name="Burland V."/>
            <person name="Riley M."/>
            <person name="Collado-Vides J."/>
            <person name="Glasner J.D."/>
            <person name="Rode C.K."/>
            <person name="Mayhew G.F."/>
            <person name="Gregor J."/>
            <person name="Davis N.W."/>
            <person name="Kirkpatrick H.A."/>
            <person name="Goeden M.A."/>
            <person name="Rose D.J."/>
            <person name="Mau B."/>
            <person name="Shao Y."/>
        </authorList>
    </citation>
    <scope>NUCLEOTIDE SEQUENCE [LARGE SCALE GENOMIC DNA]</scope>
    <source>
        <strain>K12 / MG1655 / ATCC 47076</strain>
    </source>
</reference>
<reference key="4">
    <citation type="journal article" date="2006" name="Mol. Syst. Biol.">
        <title>Highly accurate genome sequences of Escherichia coli K-12 strains MG1655 and W3110.</title>
        <authorList>
            <person name="Hayashi K."/>
            <person name="Morooka N."/>
            <person name="Yamamoto Y."/>
            <person name="Fujita K."/>
            <person name="Isono K."/>
            <person name="Choi S."/>
            <person name="Ohtsubo E."/>
            <person name="Baba T."/>
            <person name="Wanner B.L."/>
            <person name="Mori H."/>
            <person name="Horiuchi T."/>
        </authorList>
    </citation>
    <scope>NUCLEOTIDE SEQUENCE [LARGE SCALE GENOMIC DNA]</scope>
    <scope>SEQUENCE REVISION</scope>
    <source>
        <strain>K12 / W3110 / ATCC 27325 / DSM 5911</strain>
    </source>
</reference>
<reference key="5">
    <citation type="journal article" date="2017" name="J. Bacteriol.">
        <title>The Rpn (YhgA-like) proteins of Escherichia coli K-12 and their contribution to RecA-independent horizontal transfer.</title>
        <authorList>
            <person name="Kingston A.W."/>
            <person name="Ponkratz C."/>
            <person name="Raleigh E.A."/>
        </authorList>
    </citation>
    <scope>FUNCTION</scope>
    <scope>DISRUPTION PHENOTYPE</scope>
    <source>
        <strain>K12</strain>
    </source>
</reference>
<proteinExistence type="inferred from homology"/>
<evidence type="ECO:0000269" key="1">
    <source>
    </source>
</evidence>
<evidence type="ECO:0000303" key="2">
    <source>
    </source>
</evidence>
<evidence type="ECO:0000305" key="3"/>
<name>RPNC_ECOLI</name>
<feature type="chain" id="PRO_0000168526" description="Recombination-promoting nuclease RpnC">
    <location>
        <begin position="1"/>
        <end position="300"/>
    </location>
</feature>
<sequence length="300" mass="34607">MDAPSTTPHDAVFKQFLMHAETARDFLEIHLPVELRELCDLNTLHLESGSFIEESLKGHSTDVLYSVQMQGNPGYLHVVIEHQSKPDKKMAFRMMRYSIAAMHRHLEADHDKLPLVVPILFYQGEATPYPLSMCWFDMFYSPELARRVYNSPFPLVDITITPDDEIMQHRRIAILELLQKHIRQRDLMLLLEQLVTLIDEGYTSGSQLVAMQNYMLQRGHTEQADLFYGVLRDRETGGESMMTLAQWFEEKGIEKGIQQGRQEVSQEFAQRLLSKGMSREDVAEMANLPLAEIDKVINLI</sequence>
<keyword id="KW-0233">DNA recombination</keyword>
<keyword id="KW-0255">Endonuclease</keyword>
<keyword id="KW-0378">Hydrolase</keyword>
<keyword id="KW-0460">Magnesium</keyword>
<keyword id="KW-0540">Nuclease</keyword>
<keyword id="KW-1185">Reference proteome</keyword>
<comment type="function">
    <text evidence="1">A low activity DNA endonuclease yielding 3'-hydroxyl ends (Probable). Upon expression enhances RecA-independent DNA recombination 2.9-fold, concomitantly reducing viability by 59% and inducing DNA damage as measured by induction of the SOS repair response.</text>
</comment>
<comment type="disruption phenotype">
    <text evidence="1">A quadruple rpnA-rpnB-rpnC-rpnD deletion shows no change in basal RecA-independent recombination.</text>
</comment>
<comment type="similarity">
    <text evidence="3">Belongs to the Rpn/YhgA-like nuclease family.</text>
</comment>
<comment type="sequence caution" evidence="3">
    <conflict type="frameshift">
        <sequence resource="EMBL-CDS" id="AAA24273"/>
    </conflict>
</comment>
<organism>
    <name type="scientific">Escherichia coli (strain K12)</name>
    <dbReference type="NCBI Taxonomy" id="83333"/>
    <lineage>
        <taxon>Bacteria</taxon>
        <taxon>Pseudomonadati</taxon>
        <taxon>Pseudomonadota</taxon>
        <taxon>Gammaproteobacteria</taxon>
        <taxon>Enterobacterales</taxon>
        <taxon>Enterobacteriaceae</taxon>
        <taxon>Escherichia</taxon>
    </lineage>
</organism>